<accession>Q5F7W4</accession>
<reference key="1">
    <citation type="submission" date="2003-03" db="EMBL/GenBank/DDBJ databases">
        <title>The complete genome sequence of Neisseria gonorrhoeae.</title>
        <authorList>
            <person name="Lewis L.A."/>
            <person name="Gillaspy A.F."/>
            <person name="McLaughlin R.E."/>
            <person name="Gipson M."/>
            <person name="Ducey T.F."/>
            <person name="Ownbey T."/>
            <person name="Hartman K."/>
            <person name="Nydick C."/>
            <person name="Carson M.B."/>
            <person name="Vaughn J."/>
            <person name="Thomson C."/>
            <person name="Song L."/>
            <person name="Lin S."/>
            <person name="Yuan X."/>
            <person name="Najar F."/>
            <person name="Zhan M."/>
            <person name="Ren Q."/>
            <person name="Zhu H."/>
            <person name="Qi S."/>
            <person name="Kenton S.M."/>
            <person name="Lai H."/>
            <person name="White J.D."/>
            <person name="Clifton S."/>
            <person name="Roe B.A."/>
            <person name="Dyer D.W."/>
        </authorList>
    </citation>
    <scope>NUCLEOTIDE SEQUENCE [LARGE SCALE GENOMIC DNA]</scope>
    <source>
        <strain>ATCC 700825 / FA 1090</strain>
    </source>
</reference>
<gene>
    <name type="ordered locus">NGO_1052</name>
</gene>
<name>GPH_NEIG1</name>
<protein>
    <recommendedName>
        <fullName evidence="1">Phosphoglycolate phosphatase</fullName>
        <shortName evidence="1">PGP</shortName>
        <shortName evidence="1">PGPase</shortName>
        <ecNumber evidence="1">3.1.3.18</ecNumber>
    </recommendedName>
</protein>
<evidence type="ECO:0000255" key="1">
    <source>
        <dbReference type="HAMAP-Rule" id="MF_00495"/>
    </source>
</evidence>
<proteinExistence type="inferred from homology"/>
<feature type="chain" id="PRO_0000238161" description="Phosphoglycolate phosphatase">
    <location>
        <begin position="1"/>
        <end position="236"/>
    </location>
</feature>
<feature type="active site" description="Nucleophile" evidence="1">
    <location>
        <position position="14"/>
    </location>
</feature>
<feature type="binding site" evidence="1">
    <location>
        <position position="14"/>
    </location>
    <ligand>
        <name>Mg(2+)</name>
        <dbReference type="ChEBI" id="CHEBI:18420"/>
    </ligand>
</feature>
<feature type="binding site" evidence="1">
    <location>
        <position position="16"/>
    </location>
    <ligand>
        <name>Mg(2+)</name>
        <dbReference type="ChEBI" id="CHEBI:18420"/>
    </ligand>
</feature>
<feature type="binding site" evidence="1">
    <location>
        <position position="177"/>
    </location>
    <ligand>
        <name>Mg(2+)</name>
        <dbReference type="ChEBI" id="CHEBI:18420"/>
    </ligand>
</feature>
<dbReference type="EC" id="3.1.3.18" evidence="1"/>
<dbReference type="EMBL" id="AE004969">
    <property type="protein sequence ID" value="AAW89723.1"/>
    <property type="molecule type" value="Genomic_DNA"/>
</dbReference>
<dbReference type="RefSeq" id="WP_003688188.1">
    <property type="nucleotide sequence ID" value="NC_002946.2"/>
</dbReference>
<dbReference type="RefSeq" id="YP_208135.1">
    <property type="nucleotide sequence ID" value="NC_002946.2"/>
</dbReference>
<dbReference type="SMR" id="Q5F7W4"/>
<dbReference type="STRING" id="242231.NGO_1052"/>
<dbReference type="KEGG" id="ngo:NGO_1052"/>
<dbReference type="PATRIC" id="fig|242231.10.peg.1233"/>
<dbReference type="HOGENOM" id="CLU_045011_19_1_4"/>
<dbReference type="UniPathway" id="UPA00865">
    <property type="reaction ID" value="UER00834"/>
</dbReference>
<dbReference type="Proteomes" id="UP000000535">
    <property type="component" value="Chromosome"/>
</dbReference>
<dbReference type="GO" id="GO:0005829">
    <property type="term" value="C:cytosol"/>
    <property type="evidence" value="ECO:0007669"/>
    <property type="project" value="TreeGrafter"/>
</dbReference>
<dbReference type="GO" id="GO:0046872">
    <property type="term" value="F:metal ion binding"/>
    <property type="evidence" value="ECO:0007669"/>
    <property type="project" value="UniProtKB-KW"/>
</dbReference>
<dbReference type="GO" id="GO:0008967">
    <property type="term" value="F:phosphoglycolate phosphatase activity"/>
    <property type="evidence" value="ECO:0007669"/>
    <property type="project" value="UniProtKB-UniRule"/>
</dbReference>
<dbReference type="GO" id="GO:0005975">
    <property type="term" value="P:carbohydrate metabolic process"/>
    <property type="evidence" value="ECO:0007669"/>
    <property type="project" value="InterPro"/>
</dbReference>
<dbReference type="GO" id="GO:0006281">
    <property type="term" value="P:DNA repair"/>
    <property type="evidence" value="ECO:0007669"/>
    <property type="project" value="TreeGrafter"/>
</dbReference>
<dbReference type="GO" id="GO:0046295">
    <property type="term" value="P:glycolate biosynthetic process"/>
    <property type="evidence" value="ECO:0007669"/>
    <property type="project" value="UniProtKB-UniRule"/>
</dbReference>
<dbReference type="CDD" id="cd16417">
    <property type="entry name" value="HAD_PGPase"/>
    <property type="match status" value="1"/>
</dbReference>
<dbReference type="FunFam" id="3.40.50.1000:FF:000022">
    <property type="entry name" value="Phosphoglycolate phosphatase"/>
    <property type="match status" value="1"/>
</dbReference>
<dbReference type="Gene3D" id="3.40.50.1000">
    <property type="entry name" value="HAD superfamily/HAD-like"/>
    <property type="match status" value="1"/>
</dbReference>
<dbReference type="Gene3D" id="1.10.150.240">
    <property type="entry name" value="Putative phosphatase, domain 2"/>
    <property type="match status" value="1"/>
</dbReference>
<dbReference type="HAMAP" id="MF_00495">
    <property type="entry name" value="GPH_hydrolase_bact"/>
    <property type="match status" value="1"/>
</dbReference>
<dbReference type="InterPro" id="IPR050155">
    <property type="entry name" value="HAD-like_hydrolase_sf"/>
</dbReference>
<dbReference type="InterPro" id="IPR036412">
    <property type="entry name" value="HAD-like_sf"/>
</dbReference>
<dbReference type="InterPro" id="IPR006439">
    <property type="entry name" value="HAD-SF_hydro_IA"/>
</dbReference>
<dbReference type="InterPro" id="IPR023214">
    <property type="entry name" value="HAD_sf"/>
</dbReference>
<dbReference type="InterPro" id="IPR023198">
    <property type="entry name" value="PGP-like_dom2"/>
</dbReference>
<dbReference type="InterPro" id="IPR037512">
    <property type="entry name" value="PGPase_prok"/>
</dbReference>
<dbReference type="NCBIfam" id="TIGR01549">
    <property type="entry name" value="HAD-SF-IA-v1"/>
    <property type="match status" value="1"/>
</dbReference>
<dbReference type="NCBIfam" id="TIGR01509">
    <property type="entry name" value="HAD-SF-IA-v3"/>
    <property type="match status" value="1"/>
</dbReference>
<dbReference type="NCBIfam" id="TIGR01449">
    <property type="entry name" value="PGP_bact"/>
    <property type="match status" value="1"/>
</dbReference>
<dbReference type="NCBIfam" id="NF009695">
    <property type="entry name" value="PRK13222.1-2"/>
    <property type="match status" value="1"/>
</dbReference>
<dbReference type="PANTHER" id="PTHR43434">
    <property type="entry name" value="PHOSPHOGLYCOLATE PHOSPHATASE"/>
    <property type="match status" value="1"/>
</dbReference>
<dbReference type="PANTHER" id="PTHR43434:SF1">
    <property type="entry name" value="PHOSPHOGLYCOLATE PHOSPHATASE"/>
    <property type="match status" value="1"/>
</dbReference>
<dbReference type="Pfam" id="PF00702">
    <property type="entry name" value="Hydrolase"/>
    <property type="match status" value="1"/>
</dbReference>
<dbReference type="PRINTS" id="PR00413">
    <property type="entry name" value="HADHALOGNASE"/>
</dbReference>
<dbReference type="SFLD" id="SFLDG01135">
    <property type="entry name" value="C1.5.6:_HAD__Beta-PGM__Phospha"/>
    <property type="match status" value="1"/>
</dbReference>
<dbReference type="SFLD" id="SFLDG01129">
    <property type="entry name" value="C1.5:_HAD__Beta-PGM__Phosphata"/>
    <property type="match status" value="1"/>
</dbReference>
<dbReference type="SUPFAM" id="SSF56784">
    <property type="entry name" value="HAD-like"/>
    <property type="match status" value="1"/>
</dbReference>
<organism>
    <name type="scientific">Neisseria gonorrhoeae (strain ATCC 700825 / FA 1090)</name>
    <dbReference type="NCBI Taxonomy" id="242231"/>
    <lineage>
        <taxon>Bacteria</taxon>
        <taxon>Pseudomonadati</taxon>
        <taxon>Pseudomonadota</taxon>
        <taxon>Betaproteobacteria</taxon>
        <taxon>Neisseriales</taxon>
        <taxon>Neisseriaceae</taxon>
        <taxon>Neisseria</taxon>
    </lineage>
</organism>
<sequence length="236" mass="25654">MNAAIEHVQAVAFDLDGTLCDSVPDLAAAAEAMLEQLGMKPLPAKVVESYVGDGIGKLVHRVLTNDRDREADSELWEKGFVSYMKYYRDHLSVFTRPYPETEAGLALLKSLGIPLVIITNKNEILAAELLKQLGLADYFSLILGGDSLPEKKPSPLPLRHAAEVLGIDAANMLMVGDSRNDIIAAKAAGCLSVGVTFGYGDMTLLSQDDTTRPDRIIGALPEIYENLQPQKNKDEE</sequence>
<comment type="function">
    <text evidence="1">Specifically catalyzes the dephosphorylation of 2-phosphoglycolate. Is involved in the dissimilation of the intracellular 2-phosphoglycolate formed during the DNA repair of 3'-phosphoglycolate ends, a major class of DNA lesions induced by oxidative stress.</text>
</comment>
<comment type="catalytic activity">
    <reaction evidence="1">
        <text>2-phosphoglycolate + H2O = glycolate + phosphate</text>
        <dbReference type="Rhea" id="RHEA:14369"/>
        <dbReference type="ChEBI" id="CHEBI:15377"/>
        <dbReference type="ChEBI" id="CHEBI:29805"/>
        <dbReference type="ChEBI" id="CHEBI:43474"/>
        <dbReference type="ChEBI" id="CHEBI:58033"/>
        <dbReference type="EC" id="3.1.3.18"/>
    </reaction>
</comment>
<comment type="cofactor">
    <cofactor evidence="1">
        <name>Mg(2+)</name>
        <dbReference type="ChEBI" id="CHEBI:18420"/>
    </cofactor>
</comment>
<comment type="pathway">
    <text evidence="1">Organic acid metabolism; glycolate biosynthesis; glycolate from 2-phosphoglycolate: step 1/1.</text>
</comment>
<comment type="similarity">
    <text evidence="1">Belongs to the HAD-like hydrolase superfamily. CbbY/CbbZ/Gph/YieH family.</text>
</comment>
<keyword id="KW-0119">Carbohydrate metabolism</keyword>
<keyword id="KW-0378">Hydrolase</keyword>
<keyword id="KW-0460">Magnesium</keyword>
<keyword id="KW-0479">Metal-binding</keyword>
<keyword id="KW-1185">Reference proteome</keyword>